<comment type="function">
    <text evidence="1">Participates actively in the response to hyperosmotic and heat shock by preventing the aggregation of stress-denatured proteins and by disaggregating proteins, also in an autonomous, DnaK-independent fashion. Unfolded proteins bind initially to DnaJ; upon interaction with the DnaJ-bound protein, DnaK hydrolyzes its bound ATP, resulting in the formation of a stable complex. GrpE releases ADP from DnaK; ATP binding to DnaK triggers the release of the substrate protein, thus completing the reaction cycle. Several rounds of ATP-dependent interactions between DnaJ, DnaK and GrpE are required for fully efficient folding. Also involved, together with DnaK and GrpE, in the DNA replication of plasmids through activation of initiation proteins.</text>
</comment>
<comment type="cofactor">
    <cofactor evidence="1">
        <name>Zn(2+)</name>
        <dbReference type="ChEBI" id="CHEBI:29105"/>
    </cofactor>
    <text evidence="1">Binds 2 Zn(2+) ions per monomer.</text>
</comment>
<comment type="subunit">
    <text evidence="1">Homodimer.</text>
</comment>
<comment type="subcellular location">
    <subcellularLocation>
        <location evidence="1">Cytoplasm</location>
    </subcellularLocation>
</comment>
<comment type="domain">
    <text evidence="1">The J domain is necessary and sufficient to stimulate DnaK ATPase activity. Zinc center 1 plays an important role in the autonomous, DnaK-independent chaperone activity of DnaJ. Zinc center 2 is essential for interaction with DnaK and for DnaJ activity.</text>
</comment>
<comment type="similarity">
    <text evidence="1">Belongs to the DnaJ family.</text>
</comment>
<gene>
    <name evidence="1" type="primary">dnaJ</name>
    <name type="ordered locus">RPC_0330</name>
</gene>
<protein>
    <recommendedName>
        <fullName evidence="1">Chaperone protein DnaJ</fullName>
    </recommendedName>
</protein>
<dbReference type="EMBL" id="CP000301">
    <property type="protein sequence ID" value="ABD85905.1"/>
    <property type="molecule type" value="Genomic_DNA"/>
</dbReference>
<dbReference type="SMR" id="Q21CI1"/>
<dbReference type="STRING" id="316056.RPC_0330"/>
<dbReference type="KEGG" id="rpc:RPC_0330"/>
<dbReference type="eggNOG" id="COG0484">
    <property type="taxonomic scope" value="Bacteria"/>
</dbReference>
<dbReference type="HOGENOM" id="CLU_017633_0_7_5"/>
<dbReference type="OrthoDB" id="9779889at2"/>
<dbReference type="GO" id="GO:0005737">
    <property type="term" value="C:cytoplasm"/>
    <property type="evidence" value="ECO:0007669"/>
    <property type="project" value="UniProtKB-SubCell"/>
</dbReference>
<dbReference type="GO" id="GO:0005524">
    <property type="term" value="F:ATP binding"/>
    <property type="evidence" value="ECO:0007669"/>
    <property type="project" value="InterPro"/>
</dbReference>
<dbReference type="GO" id="GO:0031072">
    <property type="term" value="F:heat shock protein binding"/>
    <property type="evidence" value="ECO:0007669"/>
    <property type="project" value="InterPro"/>
</dbReference>
<dbReference type="GO" id="GO:0051082">
    <property type="term" value="F:unfolded protein binding"/>
    <property type="evidence" value="ECO:0007669"/>
    <property type="project" value="UniProtKB-UniRule"/>
</dbReference>
<dbReference type="GO" id="GO:0008270">
    <property type="term" value="F:zinc ion binding"/>
    <property type="evidence" value="ECO:0007669"/>
    <property type="project" value="UniProtKB-UniRule"/>
</dbReference>
<dbReference type="GO" id="GO:0051085">
    <property type="term" value="P:chaperone cofactor-dependent protein refolding"/>
    <property type="evidence" value="ECO:0007669"/>
    <property type="project" value="TreeGrafter"/>
</dbReference>
<dbReference type="GO" id="GO:0006260">
    <property type="term" value="P:DNA replication"/>
    <property type="evidence" value="ECO:0007669"/>
    <property type="project" value="UniProtKB-KW"/>
</dbReference>
<dbReference type="GO" id="GO:0042026">
    <property type="term" value="P:protein refolding"/>
    <property type="evidence" value="ECO:0007669"/>
    <property type="project" value="TreeGrafter"/>
</dbReference>
<dbReference type="GO" id="GO:0009408">
    <property type="term" value="P:response to heat"/>
    <property type="evidence" value="ECO:0007669"/>
    <property type="project" value="InterPro"/>
</dbReference>
<dbReference type="CDD" id="cd06257">
    <property type="entry name" value="DnaJ"/>
    <property type="match status" value="1"/>
</dbReference>
<dbReference type="CDD" id="cd10747">
    <property type="entry name" value="DnaJ_C"/>
    <property type="match status" value="1"/>
</dbReference>
<dbReference type="CDD" id="cd10719">
    <property type="entry name" value="DnaJ_zf"/>
    <property type="match status" value="1"/>
</dbReference>
<dbReference type="FunFam" id="1.10.287.110:FF:000034">
    <property type="entry name" value="Chaperone protein DnaJ"/>
    <property type="match status" value="1"/>
</dbReference>
<dbReference type="FunFam" id="2.10.230.10:FF:000002">
    <property type="entry name" value="Molecular chaperone DnaJ"/>
    <property type="match status" value="1"/>
</dbReference>
<dbReference type="FunFam" id="2.60.260.20:FF:000004">
    <property type="entry name" value="Molecular chaperone DnaJ"/>
    <property type="match status" value="1"/>
</dbReference>
<dbReference type="Gene3D" id="1.10.287.110">
    <property type="entry name" value="DnaJ domain"/>
    <property type="match status" value="1"/>
</dbReference>
<dbReference type="Gene3D" id="2.10.230.10">
    <property type="entry name" value="Heat shock protein DnaJ, cysteine-rich domain"/>
    <property type="match status" value="1"/>
</dbReference>
<dbReference type="Gene3D" id="2.60.260.20">
    <property type="entry name" value="Urease metallochaperone UreE, N-terminal domain"/>
    <property type="match status" value="2"/>
</dbReference>
<dbReference type="HAMAP" id="MF_01152">
    <property type="entry name" value="DnaJ"/>
    <property type="match status" value="1"/>
</dbReference>
<dbReference type="InterPro" id="IPR012724">
    <property type="entry name" value="DnaJ"/>
</dbReference>
<dbReference type="InterPro" id="IPR002939">
    <property type="entry name" value="DnaJ_C"/>
</dbReference>
<dbReference type="InterPro" id="IPR001623">
    <property type="entry name" value="DnaJ_domain"/>
</dbReference>
<dbReference type="InterPro" id="IPR018253">
    <property type="entry name" value="DnaJ_domain_CS"/>
</dbReference>
<dbReference type="InterPro" id="IPR008971">
    <property type="entry name" value="HSP40/DnaJ_pept-bd"/>
</dbReference>
<dbReference type="InterPro" id="IPR001305">
    <property type="entry name" value="HSP_DnaJ_Cys-rich_dom"/>
</dbReference>
<dbReference type="InterPro" id="IPR036410">
    <property type="entry name" value="HSP_DnaJ_Cys-rich_dom_sf"/>
</dbReference>
<dbReference type="InterPro" id="IPR036869">
    <property type="entry name" value="J_dom_sf"/>
</dbReference>
<dbReference type="NCBIfam" id="TIGR02349">
    <property type="entry name" value="DnaJ_bact"/>
    <property type="match status" value="1"/>
</dbReference>
<dbReference type="NCBIfam" id="NF008035">
    <property type="entry name" value="PRK10767.1"/>
    <property type="match status" value="1"/>
</dbReference>
<dbReference type="PANTHER" id="PTHR43096:SF48">
    <property type="entry name" value="CHAPERONE PROTEIN DNAJ"/>
    <property type="match status" value="1"/>
</dbReference>
<dbReference type="PANTHER" id="PTHR43096">
    <property type="entry name" value="DNAJ HOMOLOG 1, MITOCHONDRIAL-RELATED"/>
    <property type="match status" value="1"/>
</dbReference>
<dbReference type="Pfam" id="PF00226">
    <property type="entry name" value="DnaJ"/>
    <property type="match status" value="1"/>
</dbReference>
<dbReference type="Pfam" id="PF01556">
    <property type="entry name" value="DnaJ_C"/>
    <property type="match status" value="1"/>
</dbReference>
<dbReference type="Pfam" id="PF00684">
    <property type="entry name" value="DnaJ_CXXCXGXG"/>
    <property type="match status" value="1"/>
</dbReference>
<dbReference type="PRINTS" id="PR00625">
    <property type="entry name" value="JDOMAIN"/>
</dbReference>
<dbReference type="SMART" id="SM00271">
    <property type="entry name" value="DnaJ"/>
    <property type="match status" value="1"/>
</dbReference>
<dbReference type="SUPFAM" id="SSF46565">
    <property type="entry name" value="Chaperone J-domain"/>
    <property type="match status" value="1"/>
</dbReference>
<dbReference type="SUPFAM" id="SSF57938">
    <property type="entry name" value="DnaJ/Hsp40 cysteine-rich domain"/>
    <property type="match status" value="1"/>
</dbReference>
<dbReference type="SUPFAM" id="SSF49493">
    <property type="entry name" value="HSP40/DnaJ peptide-binding domain"/>
    <property type="match status" value="2"/>
</dbReference>
<dbReference type="PROSITE" id="PS00636">
    <property type="entry name" value="DNAJ_1"/>
    <property type="match status" value="1"/>
</dbReference>
<dbReference type="PROSITE" id="PS50076">
    <property type="entry name" value="DNAJ_2"/>
    <property type="match status" value="1"/>
</dbReference>
<dbReference type="PROSITE" id="PS51188">
    <property type="entry name" value="ZF_CR"/>
    <property type="match status" value="1"/>
</dbReference>
<proteinExistence type="inferred from homology"/>
<evidence type="ECO:0000255" key="1">
    <source>
        <dbReference type="HAMAP-Rule" id="MF_01152"/>
    </source>
</evidence>
<organism>
    <name type="scientific">Rhodopseudomonas palustris (strain BisB18)</name>
    <dbReference type="NCBI Taxonomy" id="316056"/>
    <lineage>
        <taxon>Bacteria</taxon>
        <taxon>Pseudomonadati</taxon>
        <taxon>Pseudomonadota</taxon>
        <taxon>Alphaproteobacteria</taxon>
        <taxon>Hyphomicrobiales</taxon>
        <taxon>Nitrobacteraceae</taxon>
        <taxon>Rhodopseudomonas</taxon>
    </lineage>
</organism>
<sequence length="379" mass="40664">MSTTKRCYYETLEVDRSADDSSLKAAFRKLAMKWHPDRNPGDASSESRFKEINEAYEVLKDGDKRAAYDRYGHAAFEQGGAGGPGFGAGFASSFSDIFEDLFGMAGQRGGRGTGRERGADLRYNMEITLEDAFVGKTAQIEIPVSVTCESCSGTGAKAGTKPKTCSMCGGAGRVRQAQGFFTLERTCPGCQGRGQTIEDPCPACSGAGRIERERTLSVNIPQGVEDGTRIRLAGEGEAGLRGGPPGDLYIFLSLASHEFFQRDGADLHCRVPISMVAAALGGEIEVPTIDKGKSKVKVPSGTQSGRRFRIAAKGMPVLRSRQTGDMYVQVVVETPQNLTKRQQELLAEFEKLSSGATQPEAAGFFTKVKDFFGTRGAAS</sequence>
<feature type="chain" id="PRO_1000085267" description="Chaperone protein DnaJ">
    <location>
        <begin position="1"/>
        <end position="379"/>
    </location>
</feature>
<feature type="domain" description="J" evidence="1">
    <location>
        <begin position="7"/>
        <end position="72"/>
    </location>
</feature>
<feature type="repeat" description="CXXCXGXG motif">
    <location>
        <begin position="148"/>
        <end position="155"/>
    </location>
</feature>
<feature type="repeat" description="CXXCXGXG motif">
    <location>
        <begin position="165"/>
        <end position="172"/>
    </location>
</feature>
<feature type="repeat" description="CXXCXGXG motif">
    <location>
        <begin position="187"/>
        <end position="194"/>
    </location>
</feature>
<feature type="repeat" description="CXXCXGXG motif">
    <location>
        <begin position="201"/>
        <end position="208"/>
    </location>
</feature>
<feature type="zinc finger region" description="CR-type" evidence="1">
    <location>
        <begin position="135"/>
        <end position="213"/>
    </location>
</feature>
<feature type="binding site" evidence="1">
    <location>
        <position position="148"/>
    </location>
    <ligand>
        <name>Zn(2+)</name>
        <dbReference type="ChEBI" id="CHEBI:29105"/>
        <label>1</label>
    </ligand>
</feature>
<feature type="binding site" evidence="1">
    <location>
        <position position="151"/>
    </location>
    <ligand>
        <name>Zn(2+)</name>
        <dbReference type="ChEBI" id="CHEBI:29105"/>
        <label>1</label>
    </ligand>
</feature>
<feature type="binding site" evidence="1">
    <location>
        <position position="165"/>
    </location>
    <ligand>
        <name>Zn(2+)</name>
        <dbReference type="ChEBI" id="CHEBI:29105"/>
        <label>2</label>
    </ligand>
</feature>
<feature type="binding site" evidence="1">
    <location>
        <position position="168"/>
    </location>
    <ligand>
        <name>Zn(2+)</name>
        <dbReference type="ChEBI" id="CHEBI:29105"/>
        <label>2</label>
    </ligand>
</feature>
<feature type="binding site" evidence="1">
    <location>
        <position position="187"/>
    </location>
    <ligand>
        <name>Zn(2+)</name>
        <dbReference type="ChEBI" id="CHEBI:29105"/>
        <label>2</label>
    </ligand>
</feature>
<feature type="binding site" evidence="1">
    <location>
        <position position="190"/>
    </location>
    <ligand>
        <name>Zn(2+)</name>
        <dbReference type="ChEBI" id="CHEBI:29105"/>
        <label>2</label>
    </ligand>
</feature>
<feature type="binding site" evidence="1">
    <location>
        <position position="201"/>
    </location>
    <ligand>
        <name>Zn(2+)</name>
        <dbReference type="ChEBI" id="CHEBI:29105"/>
        <label>1</label>
    </ligand>
</feature>
<feature type="binding site" evidence="1">
    <location>
        <position position="204"/>
    </location>
    <ligand>
        <name>Zn(2+)</name>
        <dbReference type="ChEBI" id="CHEBI:29105"/>
        <label>1</label>
    </ligand>
</feature>
<keyword id="KW-0143">Chaperone</keyword>
<keyword id="KW-0963">Cytoplasm</keyword>
<keyword id="KW-0235">DNA replication</keyword>
<keyword id="KW-0479">Metal-binding</keyword>
<keyword id="KW-0677">Repeat</keyword>
<keyword id="KW-0346">Stress response</keyword>
<keyword id="KW-0862">Zinc</keyword>
<keyword id="KW-0863">Zinc-finger</keyword>
<name>DNAJ_RHOPB</name>
<reference key="1">
    <citation type="submission" date="2006-03" db="EMBL/GenBank/DDBJ databases">
        <title>Complete sequence of Rhodopseudomonas palustris BisB18.</title>
        <authorList>
            <consortium name="US DOE Joint Genome Institute"/>
            <person name="Copeland A."/>
            <person name="Lucas S."/>
            <person name="Lapidus A."/>
            <person name="Barry K."/>
            <person name="Detter J.C."/>
            <person name="Glavina del Rio T."/>
            <person name="Hammon N."/>
            <person name="Israni S."/>
            <person name="Dalin E."/>
            <person name="Tice H."/>
            <person name="Pitluck S."/>
            <person name="Chain P."/>
            <person name="Malfatti S."/>
            <person name="Shin M."/>
            <person name="Vergez L."/>
            <person name="Schmutz J."/>
            <person name="Larimer F."/>
            <person name="Land M."/>
            <person name="Hauser L."/>
            <person name="Pelletier D.A."/>
            <person name="Kyrpides N."/>
            <person name="Anderson I."/>
            <person name="Oda Y."/>
            <person name="Harwood C.S."/>
            <person name="Richardson P."/>
        </authorList>
    </citation>
    <scope>NUCLEOTIDE SEQUENCE [LARGE SCALE GENOMIC DNA]</scope>
    <source>
        <strain>BisB18</strain>
    </source>
</reference>
<accession>Q21CI1</accession>